<accession>Q35873</accession>
<accession>Q9GAM4</accession>
<accession>R4RYE7</accession>
<proteinExistence type="inferred from homology"/>
<organism>
    <name type="scientific">Sturnira lilium</name>
    <name type="common">Lesser yellow-shouldered bat</name>
    <dbReference type="NCBI Taxonomy" id="27660"/>
    <lineage>
        <taxon>Eukaryota</taxon>
        <taxon>Metazoa</taxon>
        <taxon>Chordata</taxon>
        <taxon>Craniata</taxon>
        <taxon>Vertebrata</taxon>
        <taxon>Euteleostomi</taxon>
        <taxon>Mammalia</taxon>
        <taxon>Eutheria</taxon>
        <taxon>Laurasiatheria</taxon>
        <taxon>Chiroptera</taxon>
        <taxon>Yangochiroptera</taxon>
        <taxon>Phyllostomidae</taxon>
        <taxon>Stenodermatinae</taxon>
        <taxon>Sturnira</taxon>
    </lineage>
</organism>
<sequence length="379" mass="42561">MTNIRKTHPLLKIINNSLVDLPAPSSLSSWWNFGSLLGVCLGVQILTGLFLAMHYTSDTATAFNSVTHICRDVNYGWLLRYLHANGASMFFICLYLHVGRGLYYGSYTYSETWNIGILLLFAVMATAFMGYVLPWGQMSFWGATVITNLLSAIPYIGTELVQWIWGGFSVDKATLTRFFAFHFLLPFIVAALVMVHLLFLHETGSNNPTGIPSDPDMIPFHPYYTIKDILGFLIMLTALSALVLFSPDLLGDPDNYIPANPLNTPPHIKPEWYFLFAYAILRSIPNKLGGVLALVLSILILAIIPILHMSKQRSMMFRPLSQCLFWLLVAVLLTLTWIGGQPVEHPYIIIGQTASVLYFLILLVLMPLTSITENHLLKW</sequence>
<evidence type="ECO:0000250" key="1"/>
<evidence type="ECO:0000250" key="2">
    <source>
        <dbReference type="UniProtKB" id="P00157"/>
    </source>
</evidence>
<evidence type="ECO:0000255" key="3">
    <source>
        <dbReference type="PROSITE-ProRule" id="PRU00967"/>
    </source>
</evidence>
<evidence type="ECO:0000255" key="4">
    <source>
        <dbReference type="PROSITE-ProRule" id="PRU00968"/>
    </source>
</evidence>
<evidence type="ECO:0000305" key="5"/>
<name>CYB_STULI</name>
<geneLocation type="mitochondrion"/>
<protein>
    <recommendedName>
        <fullName>Cytochrome b</fullName>
    </recommendedName>
    <alternativeName>
        <fullName>Complex III subunit 3</fullName>
    </alternativeName>
    <alternativeName>
        <fullName>Complex III subunit III</fullName>
    </alternativeName>
    <alternativeName>
        <fullName>Cytochrome b-c1 complex subunit 3</fullName>
    </alternativeName>
    <alternativeName>
        <fullName>Ubiquinol-cytochrome-c reductase complex cytochrome b subunit</fullName>
    </alternativeName>
</protein>
<reference key="1">
    <citation type="journal article" date="1999" name="J. Mammal.">
        <title>Systematics of the genera Carollia and Rhinophylla based on the cytochrome b gene.</title>
        <authorList>
            <person name="Wright A.J."/>
            <person name="Van Den Bussche R.A."/>
            <person name="Lim B.K."/>
            <person name="Engstrom M.D."/>
            <person name="Baker R.J."/>
        </authorList>
    </citation>
    <scope>NUCLEOTIDE SEQUENCE [GENOMIC DNA]</scope>
    <source>
        <strain>Isolate TK 22631</strain>
    </source>
</reference>
<reference key="2">
    <citation type="journal article" date="2013" name="Mol. Phylogenet. Evol.">
        <title>Diversification of the Yellow-shouldered bats, Genus Sturnira (Chiroptera, Phyllostomidae), in the New World tropics.</title>
        <authorList>
            <person name="Velazco P.M."/>
            <person name="Patterson B.D."/>
        </authorList>
    </citation>
    <scope>NUCLEOTIDE SEQUENCE [LARGE SCALE GENOMIC DNA]</scope>
</reference>
<reference key="3">
    <citation type="journal article" date="1994" name="J. Mammal.">
        <title>Familial affinity of Tomopeas ravus (Chiroptera) based on protein electrophoretic and cytochrome b sequence data.</title>
        <authorList>
            <person name="Sudman P.D."/>
            <person name="Barkley L.J."/>
            <person name="Hafner M.S."/>
        </authorList>
    </citation>
    <scope>NUCLEOTIDE SEQUENCE [GENOMIC DNA] OF 1-176</scope>
    <source>
        <strain>Isolate LSUMZ 25478</strain>
        <tissue>Kidney</tissue>
        <tissue>Liver</tissue>
    </source>
</reference>
<comment type="function">
    <text evidence="2">Component of the ubiquinol-cytochrome c reductase complex (complex III or cytochrome b-c1 complex) that is part of the mitochondrial respiratory chain. The b-c1 complex mediates electron transfer from ubiquinol to cytochrome c. Contributes to the generation of a proton gradient across the mitochondrial membrane that is then used for ATP synthesis.</text>
</comment>
<comment type="cofactor">
    <cofactor evidence="2">
        <name>heme b</name>
        <dbReference type="ChEBI" id="CHEBI:60344"/>
    </cofactor>
    <text evidence="2">Binds 2 heme b groups non-covalently.</text>
</comment>
<comment type="subunit">
    <text evidence="2">The cytochrome bc1 complex contains 11 subunits: 3 respiratory subunits (MT-CYB, CYC1 and UQCRFS1), 2 core proteins (UQCRC1 and UQCRC2) and 6 low-molecular weight proteins (UQCRH/QCR6, UQCRB/QCR7, UQCRQ/QCR8, UQCR10/QCR9, UQCR11/QCR10 and a cleavage product of UQCRFS1). This cytochrome bc1 complex then forms a dimer.</text>
</comment>
<comment type="subcellular location">
    <subcellularLocation>
        <location evidence="2">Mitochondrion inner membrane</location>
        <topology evidence="2">Multi-pass membrane protein</topology>
    </subcellularLocation>
</comment>
<comment type="miscellaneous">
    <text evidence="1">Heme 1 (or BL or b562) is low-potential and absorbs at about 562 nm, and heme 2 (or BH or b566) is high-potential and absorbs at about 566 nm.</text>
</comment>
<comment type="similarity">
    <text evidence="3 4">Belongs to the cytochrome b family.</text>
</comment>
<comment type="caution">
    <text evidence="2">The full-length protein contains only eight transmembrane helices, not nine as predicted by bioinformatics tools.</text>
</comment>
<comment type="sequence caution" evidence="5">
    <conflict type="miscellaneous discrepancy">
        <sequence resource="EMBL-CDS" id="AAG25916"/>
    </conflict>
    <text>Sequence of dubious origin with higher similarity with canine sequences.</text>
</comment>
<gene>
    <name type="primary">MT-CYB</name>
    <name type="synonym">COB</name>
    <name type="synonym">CYTB</name>
    <name type="synonym">MTCYB</name>
</gene>
<dbReference type="EMBL" id="AF187035">
    <property type="protein sequence ID" value="AAG25916.1"/>
    <property type="status" value="ALT_SEQ"/>
    <property type="molecule type" value="Genomic_DNA"/>
</dbReference>
<dbReference type="EMBL" id="KC753847">
    <property type="protein sequence ID" value="AGL94629.1"/>
    <property type="molecule type" value="Genomic_DNA"/>
</dbReference>
<dbReference type="EMBL" id="L19733">
    <property type="protein sequence ID" value="AAA18504.1"/>
    <property type="molecule type" value="Genomic_DNA"/>
</dbReference>
<dbReference type="SMR" id="Q35873"/>
<dbReference type="GO" id="GO:0005743">
    <property type="term" value="C:mitochondrial inner membrane"/>
    <property type="evidence" value="ECO:0007669"/>
    <property type="project" value="UniProtKB-SubCell"/>
</dbReference>
<dbReference type="GO" id="GO:0045275">
    <property type="term" value="C:respiratory chain complex III"/>
    <property type="evidence" value="ECO:0007669"/>
    <property type="project" value="InterPro"/>
</dbReference>
<dbReference type="GO" id="GO:0046872">
    <property type="term" value="F:metal ion binding"/>
    <property type="evidence" value="ECO:0007669"/>
    <property type="project" value="UniProtKB-KW"/>
</dbReference>
<dbReference type="GO" id="GO:0008121">
    <property type="term" value="F:ubiquinol-cytochrome-c reductase activity"/>
    <property type="evidence" value="ECO:0007669"/>
    <property type="project" value="InterPro"/>
</dbReference>
<dbReference type="GO" id="GO:0006122">
    <property type="term" value="P:mitochondrial electron transport, ubiquinol to cytochrome c"/>
    <property type="evidence" value="ECO:0007669"/>
    <property type="project" value="TreeGrafter"/>
</dbReference>
<dbReference type="CDD" id="cd00290">
    <property type="entry name" value="cytochrome_b_C"/>
    <property type="match status" value="1"/>
</dbReference>
<dbReference type="CDD" id="cd00284">
    <property type="entry name" value="Cytochrome_b_N"/>
    <property type="match status" value="1"/>
</dbReference>
<dbReference type="FunFam" id="1.20.810.10:FF:000002">
    <property type="entry name" value="Cytochrome b"/>
    <property type="match status" value="1"/>
</dbReference>
<dbReference type="Gene3D" id="1.20.810.10">
    <property type="entry name" value="Cytochrome Bc1 Complex, Chain C"/>
    <property type="match status" value="1"/>
</dbReference>
<dbReference type="InterPro" id="IPR005798">
    <property type="entry name" value="Cyt_b/b6_C"/>
</dbReference>
<dbReference type="InterPro" id="IPR036150">
    <property type="entry name" value="Cyt_b/b6_C_sf"/>
</dbReference>
<dbReference type="InterPro" id="IPR005797">
    <property type="entry name" value="Cyt_b/b6_N"/>
</dbReference>
<dbReference type="InterPro" id="IPR027387">
    <property type="entry name" value="Cytb/b6-like_sf"/>
</dbReference>
<dbReference type="InterPro" id="IPR030689">
    <property type="entry name" value="Cytochrome_b"/>
</dbReference>
<dbReference type="InterPro" id="IPR048260">
    <property type="entry name" value="Cytochrome_b_C_euk/bac"/>
</dbReference>
<dbReference type="InterPro" id="IPR048259">
    <property type="entry name" value="Cytochrome_b_N_euk/bac"/>
</dbReference>
<dbReference type="InterPro" id="IPR016174">
    <property type="entry name" value="Di-haem_cyt_TM"/>
</dbReference>
<dbReference type="PANTHER" id="PTHR19271">
    <property type="entry name" value="CYTOCHROME B"/>
    <property type="match status" value="1"/>
</dbReference>
<dbReference type="PANTHER" id="PTHR19271:SF16">
    <property type="entry name" value="CYTOCHROME B"/>
    <property type="match status" value="1"/>
</dbReference>
<dbReference type="Pfam" id="PF00032">
    <property type="entry name" value="Cytochrom_B_C"/>
    <property type="match status" value="1"/>
</dbReference>
<dbReference type="Pfam" id="PF00033">
    <property type="entry name" value="Cytochrome_B"/>
    <property type="match status" value="1"/>
</dbReference>
<dbReference type="PIRSF" id="PIRSF038885">
    <property type="entry name" value="COB"/>
    <property type="match status" value="1"/>
</dbReference>
<dbReference type="SUPFAM" id="SSF81648">
    <property type="entry name" value="a domain/subunit of cytochrome bc1 complex (Ubiquinol-cytochrome c reductase)"/>
    <property type="match status" value="1"/>
</dbReference>
<dbReference type="SUPFAM" id="SSF81342">
    <property type="entry name" value="Transmembrane di-heme cytochromes"/>
    <property type="match status" value="1"/>
</dbReference>
<dbReference type="PROSITE" id="PS51003">
    <property type="entry name" value="CYTB_CTER"/>
    <property type="match status" value="1"/>
</dbReference>
<dbReference type="PROSITE" id="PS51002">
    <property type="entry name" value="CYTB_NTER"/>
    <property type="match status" value="1"/>
</dbReference>
<feature type="chain" id="PRO_0000061620" description="Cytochrome b">
    <location>
        <begin position="1"/>
        <end position="379"/>
    </location>
</feature>
<feature type="transmembrane region" description="Helical" evidence="2">
    <location>
        <begin position="33"/>
        <end position="53"/>
    </location>
</feature>
<feature type="transmembrane region" description="Helical" evidence="2">
    <location>
        <begin position="77"/>
        <end position="98"/>
    </location>
</feature>
<feature type="transmembrane region" description="Helical" evidence="2">
    <location>
        <begin position="113"/>
        <end position="133"/>
    </location>
</feature>
<feature type="transmembrane region" description="Helical" evidence="2">
    <location>
        <begin position="178"/>
        <end position="198"/>
    </location>
</feature>
<feature type="transmembrane region" description="Helical" evidence="2">
    <location>
        <begin position="226"/>
        <end position="246"/>
    </location>
</feature>
<feature type="transmembrane region" description="Helical" evidence="2">
    <location>
        <begin position="288"/>
        <end position="308"/>
    </location>
</feature>
<feature type="transmembrane region" description="Helical" evidence="2">
    <location>
        <begin position="320"/>
        <end position="340"/>
    </location>
</feature>
<feature type="transmembrane region" description="Helical" evidence="2">
    <location>
        <begin position="347"/>
        <end position="367"/>
    </location>
</feature>
<feature type="binding site" description="axial binding residue" evidence="2">
    <location>
        <position position="83"/>
    </location>
    <ligand>
        <name>heme b</name>
        <dbReference type="ChEBI" id="CHEBI:60344"/>
        <label>b562</label>
    </ligand>
    <ligandPart>
        <name>Fe</name>
        <dbReference type="ChEBI" id="CHEBI:18248"/>
    </ligandPart>
</feature>
<feature type="binding site" description="axial binding residue" evidence="2">
    <location>
        <position position="97"/>
    </location>
    <ligand>
        <name>heme b</name>
        <dbReference type="ChEBI" id="CHEBI:60344"/>
        <label>b566</label>
    </ligand>
    <ligandPart>
        <name>Fe</name>
        <dbReference type="ChEBI" id="CHEBI:18248"/>
    </ligandPart>
</feature>
<feature type="binding site" description="axial binding residue" evidence="2">
    <location>
        <position position="182"/>
    </location>
    <ligand>
        <name>heme b</name>
        <dbReference type="ChEBI" id="CHEBI:60344"/>
        <label>b562</label>
    </ligand>
    <ligandPart>
        <name>Fe</name>
        <dbReference type="ChEBI" id="CHEBI:18248"/>
    </ligandPart>
</feature>
<feature type="binding site" description="axial binding residue" evidence="2">
    <location>
        <position position="196"/>
    </location>
    <ligand>
        <name>heme b</name>
        <dbReference type="ChEBI" id="CHEBI:60344"/>
        <label>b566</label>
    </ligand>
    <ligandPart>
        <name>Fe</name>
        <dbReference type="ChEBI" id="CHEBI:18248"/>
    </ligandPart>
</feature>
<feature type="binding site" evidence="2">
    <location>
        <position position="201"/>
    </location>
    <ligand>
        <name>a ubiquinone</name>
        <dbReference type="ChEBI" id="CHEBI:16389"/>
    </ligand>
</feature>
<feature type="sequence conflict" description="In Ref. 3; AAA18504." evidence="5" ref="3">
    <original>Y</original>
    <variation>C</variation>
    <location>
        <position position="55"/>
    </location>
</feature>
<feature type="sequence conflict" description="In Ref. 3; AAA18504." evidence="5" ref="3">
    <original>L</original>
    <variation>S</variation>
    <location>
        <position position="102"/>
    </location>
</feature>
<feature type="sequence conflict" description="In Ref. 3; AAA18504." evidence="5" ref="3">
    <original>P</original>
    <variation>S</variation>
    <location>
        <position position="134"/>
    </location>
</feature>
<feature type="sequence conflict" description="In Ref. 3; AAA18504." evidence="5" ref="3">
    <original>S</original>
    <variation>F</variation>
    <location>
        <position position="169"/>
    </location>
</feature>
<keyword id="KW-0249">Electron transport</keyword>
<keyword id="KW-0349">Heme</keyword>
<keyword id="KW-0408">Iron</keyword>
<keyword id="KW-0472">Membrane</keyword>
<keyword id="KW-0479">Metal-binding</keyword>
<keyword id="KW-0496">Mitochondrion</keyword>
<keyword id="KW-0999">Mitochondrion inner membrane</keyword>
<keyword id="KW-0679">Respiratory chain</keyword>
<keyword id="KW-0812">Transmembrane</keyword>
<keyword id="KW-1133">Transmembrane helix</keyword>
<keyword id="KW-0813">Transport</keyword>
<keyword id="KW-0830">Ubiquinone</keyword>